<proteinExistence type="evidence at protein level"/>
<comment type="catalytic activity">
    <reaction evidence="1">
        <text>tRNA(Leu) + L-leucine + ATP = L-leucyl-tRNA(Leu) + AMP + diphosphate</text>
        <dbReference type="Rhea" id="RHEA:11688"/>
        <dbReference type="Rhea" id="RHEA-COMP:9613"/>
        <dbReference type="Rhea" id="RHEA-COMP:9622"/>
        <dbReference type="ChEBI" id="CHEBI:30616"/>
        <dbReference type="ChEBI" id="CHEBI:33019"/>
        <dbReference type="ChEBI" id="CHEBI:57427"/>
        <dbReference type="ChEBI" id="CHEBI:78442"/>
        <dbReference type="ChEBI" id="CHEBI:78494"/>
        <dbReference type="ChEBI" id="CHEBI:456215"/>
        <dbReference type="EC" id="6.1.1.4"/>
    </reaction>
</comment>
<comment type="interaction">
    <interactant intactId="EBI-7963108">
        <id>O27552</id>
    </interactant>
    <interactant intactId="EBI-7963255">
        <id>O27585</id>
        <label>lysS</label>
    </interactant>
    <organismsDiffer>false</organismsDiffer>
    <experiments>3</experiments>
</comment>
<comment type="interaction">
    <interactant intactId="EBI-7963108">
        <id>O27552</id>
    </interactant>
    <interactant intactId="EBI-7963357">
        <id>O26708</id>
        <label>proS</label>
    </interactant>
    <organismsDiffer>false</organismsDiffer>
    <experiments>3</experiments>
</comment>
<comment type="interaction">
    <interactant intactId="EBI-7963108">
        <id>O27552</id>
    </interactant>
    <interactant intactId="EBI-7963138">
        <id>O27132</id>
        <label>tuf</label>
    </interactant>
    <organismsDiffer>false</organismsDiffer>
    <experiments>3</experiments>
</comment>
<comment type="subcellular location">
    <subcellularLocation>
        <location evidence="1">Cytoplasm</location>
    </subcellularLocation>
</comment>
<comment type="similarity">
    <text evidence="1">Belongs to the class-I aminoacyl-tRNA synthetase family.</text>
</comment>
<feature type="chain" id="PRO_0000152135" description="Leucine--tRNA ligase">
    <location>
        <begin position="1"/>
        <end position="937"/>
    </location>
</feature>
<feature type="short sequence motif" description="'HIGH' region">
    <location>
        <begin position="34"/>
        <end position="44"/>
    </location>
</feature>
<feature type="short sequence motif" description="'KMSKS' region">
    <location>
        <begin position="609"/>
        <end position="613"/>
    </location>
</feature>
<sequence length="937" mass="108031">MDIERKWRDRWRDAGIFQADPDDREKIFLTVAYPYPSGAMHIGHGRTYTVPDVYARFKRMQGYNVLFPMAWHVTGAPVIGIARRIQRKDPWTLKIYREVHRVPEDELERFSDPEYIVEYFSREYRSVMEDMGYSIDWRREFKTTDPTYSRFIQWQIRKLRDLGLVRKGAHPVKYCPECENPVGDHDLLEGEGVAINQLTLLKFKLGDSYLVAATFRPETIYGATNLWLNPDEDYVRVETGGEEWIISRAAVDNLSHQKLDLKVSGDVNPGDLIGMCVENPVTGQEHPILPASFVDPEYATGVVFSVPAHAPADFIALEDLRTDHELLERYGLEDVVADIEPVNVIAVDGYGEFPAAEVIEKFGVRNQEDPRLEDATGELYKIEHARGVMSSHIPVYGGMKVSEAREVIADELKDQGLADEMYEFAERPVICRCGGRCVVRVMEDQWFMKYSDDAWKDLAHRCLDGMKIIPEEVRANFEYYIDWLNDWACSRRIGLGTRLPWDERWIIEPLTDSTIYMAYYTIAHRLREMDAGEMDDEFFDAIFLDDSGTFEDLREEFRYWYPLDWRLSAKDLIGNHLTFHIFHHSAIFPESGWPRGAVVFGMGLLEGNKMSSSKGNVILLRDAIEKHGADVVRLFLMSSAEPWQDFDWRESEVIGTRRRIEWFREFGERVSGILDGRPVLSEVTPAEPESFIGRWMMGQLNQRIREATRALESFQTRKAVQEALYLLKKDVDHYLKRVEGRVDDEVKSVLANVLHAWIRLMAPFIPYTAEEMWERYGGEGFVAEAPWPDFSDDAESRDVQVAEEMVQNTVRDIQEIMKILGSTPERVHIYTSPKWKWDVLRVAAEVGKLDMGSIMGRVSAEGIHDNMKEVAEFVRRIIRDLGKSEVTVIDEYSVLMDASDYIESEVGARVVIHSKPDYDPENKAVNAVPLKPAIYLE</sequence>
<keyword id="KW-0030">Aminoacyl-tRNA synthetase</keyword>
<keyword id="KW-0067">ATP-binding</keyword>
<keyword id="KW-0963">Cytoplasm</keyword>
<keyword id="KW-0436">Ligase</keyword>
<keyword id="KW-0547">Nucleotide-binding</keyword>
<keyword id="KW-0648">Protein biosynthesis</keyword>
<keyword id="KW-1185">Reference proteome</keyword>
<evidence type="ECO:0000255" key="1">
    <source>
        <dbReference type="HAMAP-Rule" id="MF_00049"/>
    </source>
</evidence>
<dbReference type="EC" id="6.1.1.4" evidence="1"/>
<dbReference type="EMBL" id="AE000666">
    <property type="protein sequence ID" value="AAB85983.1"/>
    <property type="molecule type" value="Genomic_DNA"/>
</dbReference>
<dbReference type="PIR" id="B69068">
    <property type="entry name" value="B69068"/>
</dbReference>
<dbReference type="SMR" id="O27552"/>
<dbReference type="FunCoup" id="O27552">
    <property type="interactions" value="201"/>
</dbReference>
<dbReference type="IntAct" id="O27552">
    <property type="interactions" value="3"/>
</dbReference>
<dbReference type="MINT" id="O27552"/>
<dbReference type="STRING" id="187420.MTH_1508"/>
<dbReference type="PaxDb" id="187420-MTH_1508"/>
<dbReference type="EnsemblBacteria" id="AAB85983">
    <property type="protein sequence ID" value="AAB85983"/>
    <property type="gene ID" value="MTH_1508"/>
</dbReference>
<dbReference type="KEGG" id="mth:MTH_1508"/>
<dbReference type="PATRIC" id="fig|187420.15.peg.1471"/>
<dbReference type="HOGENOM" id="CLU_004174_0_0_2"/>
<dbReference type="InParanoid" id="O27552"/>
<dbReference type="SABIO-RK" id="O27552"/>
<dbReference type="Proteomes" id="UP000005223">
    <property type="component" value="Chromosome"/>
</dbReference>
<dbReference type="GO" id="GO:0005737">
    <property type="term" value="C:cytoplasm"/>
    <property type="evidence" value="ECO:0007669"/>
    <property type="project" value="UniProtKB-SubCell"/>
</dbReference>
<dbReference type="GO" id="GO:0002161">
    <property type="term" value="F:aminoacyl-tRNA deacylase activity"/>
    <property type="evidence" value="ECO:0007669"/>
    <property type="project" value="InterPro"/>
</dbReference>
<dbReference type="GO" id="GO:0005524">
    <property type="term" value="F:ATP binding"/>
    <property type="evidence" value="ECO:0007669"/>
    <property type="project" value="UniProtKB-UniRule"/>
</dbReference>
<dbReference type="GO" id="GO:0004823">
    <property type="term" value="F:leucine-tRNA ligase activity"/>
    <property type="evidence" value="ECO:0007669"/>
    <property type="project" value="UniProtKB-UniRule"/>
</dbReference>
<dbReference type="GO" id="GO:0006429">
    <property type="term" value="P:leucyl-tRNA aminoacylation"/>
    <property type="evidence" value="ECO:0007669"/>
    <property type="project" value="UniProtKB-UniRule"/>
</dbReference>
<dbReference type="CDD" id="cd07959">
    <property type="entry name" value="Anticodon_Ia_Leu_AEc"/>
    <property type="match status" value="1"/>
</dbReference>
<dbReference type="CDD" id="cd00812">
    <property type="entry name" value="LeuRS_core"/>
    <property type="match status" value="1"/>
</dbReference>
<dbReference type="Gene3D" id="3.30.2320.20">
    <property type="entry name" value="Class I aminoacyl-tRNA synthetases (RS)"/>
    <property type="match status" value="1"/>
</dbReference>
<dbReference type="Gene3D" id="3.40.50.620">
    <property type="entry name" value="HUPs"/>
    <property type="match status" value="1"/>
</dbReference>
<dbReference type="Gene3D" id="1.10.730.10">
    <property type="entry name" value="Isoleucyl-tRNA Synthetase, Domain 1"/>
    <property type="match status" value="1"/>
</dbReference>
<dbReference type="Gene3D" id="1.10.10.720">
    <property type="entry name" value="leucyl-tRNA synthetase"/>
    <property type="match status" value="1"/>
</dbReference>
<dbReference type="Gene3D" id="3.90.740.10">
    <property type="entry name" value="Valyl/Leucyl/Isoleucyl-tRNA synthetase, editing domain"/>
    <property type="match status" value="1"/>
</dbReference>
<dbReference type="HAMAP" id="MF_00049_A">
    <property type="entry name" value="Leu_tRNA_synth_A"/>
    <property type="match status" value="1"/>
</dbReference>
<dbReference type="InterPro" id="IPR001412">
    <property type="entry name" value="aa-tRNA-synth_I_CS"/>
</dbReference>
<dbReference type="InterPro" id="IPR002300">
    <property type="entry name" value="aa-tRNA-synth_Ia"/>
</dbReference>
<dbReference type="InterPro" id="IPR020791">
    <property type="entry name" value="Leu-tRNA-lgase_arc"/>
</dbReference>
<dbReference type="InterPro" id="IPR004493">
    <property type="entry name" value="Leu-tRNA-synth_Ia_arc/euk"/>
</dbReference>
<dbReference type="InterPro" id="IPR013155">
    <property type="entry name" value="M/V/L/I-tRNA-synth_anticd-bd"/>
</dbReference>
<dbReference type="InterPro" id="IPR014729">
    <property type="entry name" value="Rossmann-like_a/b/a_fold"/>
</dbReference>
<dbReference type="InterPro" id="IPR009080">
    <property type="entry name" value="tRNAsynth_Ia_anticodon-bd"/>
</dbReference>
<dbReference type="InterPro" id="IPR009008">
    <property type="entry name" value="Val/Leu/Ile-tRNA-synth_edit"/>
</dbReference>
<dbReference type="NCBIfam" id="TIGR00395">
    <property type="entry name" value="leuS_arch"/>
    <property type="match status" value="1"/>
</dbReference>
<dbReference type="NCBIfam" id="NF008957">
    <property type="entry name" value="PRK12300.1"/>
    <property type="match status" value="1"/>
</dbReference>
<dbReference type="PANTHER" id="PTHR45794:SF1">
    <property type="entry name" value="LEUCINE--TRNA LIGASE, CYTOPLASMIC"/>
    <property type="match status" value="1"/>
</dbReference>
<dbReference type="PANTHER" id="PTHR45794">
    <property type="entry name" value="LEUCYL-TRNA SYNTHETASE"/>
    <property type="match status" value="1"/>
</dbReference>
<dbReference type="Pfam" id="PF08264">
    <property type="entry name" value="Anticodon_1"/>
    <property type="match status" value="1"/>
</dbReference>
<dbReference type="Pfam" id="PF00133">
    <property type="entry name" value="tRNA-synt_1"/>
    <property type="match status" value="1"/>
</dbReference>
<dbReference type="SUPFAM" id="SSF47323">
    <property type="entry name" value="Anticodon-binding domain of a subclass of class I aminoacyl-tRNA synthetases"/>
    <property type="match status" value="1"/>
</dbReference>
<dbReference type="SUPFAM" id="SSF52374">
    <property type="entry name" value="Nucleotidylyl transferase"/>
    <property type="match status" value="1"/>
</dbReference>
<dbReference type="SUPFAM" id="SSF50677">
    <property type="entry name" value="ValRS/IleRS/LeuRS editing domain"/>
    <property type="match status" value="1"/>
</dbReference>
<dbReference type="PROSITE" id="PS00178">
    <property type="entry name" value="AA_TRNA_LIGASE_I"/>
    <property type="match status" value="1"/>
</dbReference>
<name>SYL_METTH</name>
<reference key="1">
    <citation type="journal article" date="1997" name="J. Bacteriol.">
        <title>Complete genome sequence of Methanobacterium thermoautotrophicum deltaH: functional analysis and comparative genomics.</title>
        <authorList>
            <person name="Smith D.R."/>
            <person name="Doucette-Stamm L.A."/>
            <person name="Deloughery C."/>
            <person name="Lee H.-M."/>
            <person name="Dubois J."/>
            <person name="Aldredge T."/>
            <person name="Bashirzadeh R."/>
            <person name="Blakely D."/>
            <person name="Cook R."/>
            <person name="Gilbert K."/>
            <person name="Harrison D."/>
            <person name="Hoang L."/>
            <person name="Keagle P."/>
            <person name="Lumm W."/>
            <person name="Pothier B."/>
            <person name="Qiu D."/>
            <person name="Spadafora R."/>
            <person name="Vicare R."/>
            <person name="Wang Y."/>
            <person name="Wierzbowski J."/>
            <person name="Gibson R."/>
            <person name="Jiwani N."/>
            <person name="Caruso A."/>
            <person name="Bush D."/>
            <person name="Safer H."/>
            <person name="Patwell D."/>
            <person name="Prabhakar S."/>
            <person name="McDougall S."/>
            <person name="Shimer G."/>
            <person name="Goyal A."/>
            <person name="Pietrovski S."/>
            <person name="Church G.M."/>
            <person name="Daniels C.J."/>
            <person name="Mao J.-I."/>
            <person name="Rice P."/>
            <person name="Noelling J."/>
            <person name="Reeve J.N."/>
        </authorList>
    </citation>
    <scope>NUCLEOTIDE SEQUENCE [LARGE SCALE GENOMIC DNA]</scope>
    <source>
        <strain>ATCC 29096 / DSM 1053 / JCM 10044 / NBRC 100330 / Delta H</strain>
    </source>
</reference>
<gene>
    <name evidence="1" type="primary">leuS</name>
    <name type="ordered locus">MTH_1508</name>
</gene>
<protein>
    <recommendedName>
        <fullName evidence="1">Leucine--tRNA ligase</fullName>
        <ecNumber evidence="1">6.1.1.4</ecNumber>
    </recommendedName>
    <alternativeName>
        <fullName evidence="1">Leucyl-tRNA synthetase</fullName>
        <shortName evidence="1">LeuRS</shortName>
    </alternativeName>
</protein>
<accession>O27552</accession>
<organism>
    <name type="scientific">Methanothermobacter thermautotrophicus (strain ATCC 29096 / DSM 1053 / JCM 10044 / NBRC 100330 / Delta H)</name>
    <name type="common">Methanobacterium thermoautotrophicum</name>
    <dbReference type="NCBI Taxonomy" id="187420"/>
    <lineage>
        <taxon>Archaea</taxon>
        <taxon>Methanobacteriati</taxon>
        <taxon>Methanobacteriota</taxon>
        <taxon>Methanomada group</taxon>
        <taxon>Methanobacteria</taxon>
        <taxon>Methanobacteriales</taxon>
        <taxon>Methanobacteriaceae</taxon>
        <taxon>Methanothermobacter</taxon>
    </lineage>
</organism>